<dbReference type="EMBL" id="AE016825">
    <property type="protein sequence ID" value="AAQ61570.1"/>
    <property type="status" value="ALT_INIT"/>
    <property type="molecule type" value="Genomic_DNA"/>
</dbReference>
<dbReference type="RefSeq" id="WP_043596763.1">
    <property type="nucleotide sequence ID" value="NC_005085.1"/>
</dbReference>
<dbReference type="SMR" id="Q7NR75"/>
<dbReference type="STRING" id="243365.CV_3909"/>
<dbReference type="GeneID" id="66365147"/>
<dbReference type="KEGG" id="cvi:CV_3909"/>
<dbReference type="eggNOG" id="COG1678">
    <property type="taxonomic scope" value="Bacteria"/>
</dbReference>
<dbReference type="HOGENOM" id="CLU_057596_1_0_4"/>
<dbReference type="OrthoDB" id="9807486at2"/>
<dbReference type="Proteomes" id="UP000001424">
    <property type="component" value="Chromosome"/>
</dbReference>
<dbReference type="GO" id="GO:0005829">
    <property type="term" value="C:cytosol"/>
    <property type="evidence" value="ECO:0007669"/>
    <property type="project" value="TreeGrafter"/>
</dbReference>
<dbReference type="Gene3D" id="3.40.1740.10">
    <property type="entry name" value="VC0467-like"/>
    <property type="match status" value="1"/>
</dbReference>
<dbReference type="HAMAP" id="MF_00758">
    <property type="entry name" value="UPF0301"/>
    <property type="match status" value="1"/>
</dbReference>
<dbReference type="InterPro" id="IPR003774">
    <property type="entry name" value="AlgH-like"/>
</dbReference>
<dbReference type="NCBIfam" id="NF001266">
    <property type="entry name" value="PRK00228.1-1"/>
    <property type="match status" value="1"/>
</dbReference>
<dbReference type="PANTHER" id="PTHR30327">
    <property type="entry name" value="UNCHARACTERIZED PROTEIN YQGE"/>
    <property type="match status" value="1"/>
</dbReference>
<dbReference type="PANTHER" id="PTHR30327:SF1">
    <property type="entry name" value="UPF0301 PROTEIN YQGE"/>
    <property type="match status" value="1"/>
</dbReference>
<dbReference type="Pfam" id="PF02622">
    <property type="entry name" value="DUF179"/>
    <property type="match status" value="1"/>
</dbReference>
<dbReference type="SUPFAM" id="SSF143456">
    <property type="entry name" value="VC0467-like"/>
    <property type="match status" value="1"/>
</dbReference>
<gene>
    <name type="ordered locus">CV_3909</name>
</gene>
<evidence type="ECO:0000255" key="1">
    <source>
        <dbReference type="HAMAP-Rule" id="MF_00758"/>
    </source>
</evidence>
<evidence type="ECO:0000305" key="2"/>
<feature type="chain" id="PRO_0000214319" description="UPF0301 protein CV_3909">
    <location>
        <begin position="1"/>
        <end position="186"/>
    </location>
</feature>
<reference key="1">
    <citation type="journal article" date="2003" name="Proc. Natl. Acad. Sci. U.S.A.">
        <title>The complete genome sequence of Chromobacterium violaceum reveals remarkable and exploitable bacterial adaptability.</title>
        <authorList>
            <person name="Vasconcelos A.T.R."/>
            <person name="de Almeida D.F."/>
            <person name="Hungria M."/>
            <person name="Guimaraes C.T."/>
            <person name="Antonio R.V."/>
            <person name="Almeida F.C."/>
            <person name="de Almeida L.G.P."/>
            <person name="de Almeida R."/>
            <person name="Alves-Gomes J.A."/>
            <person name="Andrade E.M."/>
            <person name="Araripe J."/>
            <person name="de Araujo M.F.F."/>
            <person name="Astolfi-Filho S."/>
            <person name="Azevedo V."/>
            <person name="Baptista A.J."/>
            <person name="Bataus L.A.M."/>
            <person name="Batista J.S."/>
            <person name="Belo A."/>
            <person name="van den Berg C."/>
            <person name="Bogo M."/>
            <person name="Bonatto S."/>
            <person name="Bordignon J."/>
            <person name="Brigido M.M."/>
            <person name="Brito C.A."/>
            <person name="Brocchi M."/>
            <person name="Burity H.A."/>
            <person name="Camargo A.A."/>
            <person name="Cardoso D.D.P."/>
            <person name="Carneiro N.P."/>
            <person name="Carraro D.M."/>
            <person name="Carvalho C.M.B."/>
            <person name="Cascardo J.C.M."/>
            <person name="Cavada B.S."/>
            <person name="Chueire L.M.O."/>
            <person name="Creczynski-Pasa T.B."/>
            <person name="Cunha-Junior N.C."/>
            <person name="Fagundes N."/>
            <person name="Falcao C.L."/>
            <person name="Fantinatti F."/>
            <person name="Farias I.P."/>
            <person name="Felipe M.S.S."/>
            <person name="Ferrari L.P."/>
            <person name="Ferro J.A."/>
            <person name="Ferro M.I.T."/>
            <person name="Franco G.R."/>
            <person name="Freitas N.S.A."/>
            <person name="Furlan L.R."/>
            <person name="Gazzinelli R.T."/>
            <person name="Gomes E.A."/>
            <person name="Goncalves P.R."/>
            <person name="Grangeiro T.B."/>
            <person name="Grattapaglia D."/>
            <person name="Grisard E.C."/>
            <person name="Hanna E.S."/>
            <person name="Jardim S.N."/>
            <person name="Laurino J."/>
            <person name="Leoi L.C.T."/>
            <person name="Lima L.F.A."/>
            <person name="Loureiro M.F."/>
            <person name="Lyra M.C.C.P."/>
            <person name="Madeira H.M.F."/>
            <person name="Manfio G.P."/>
            <person name="Maranhao A.Q."/>
            <person name="Martins W.S."/>
            <person name="di Mauro S.M.Z."/>
            <person name="de Medeiros S.R.B."/>
            <person name="Meissner R.V."/>
            <person name="Moreira M.A.M."/>
            <person name="Nascimento F.F."/>
            <person name="Nicolas M.F."/>
            <person name="Oliveira J.G."/>
            <person name="Oliveira S.C."/>
            <person name="Paixao R.F.C."/>
            <person name="Parente J.A."/>
            <person name="Pedrosa F.O."/>
            <person name="Pena S.D.J."/>
            <person name="Pereira J.O."/>
            <person name="Pereira M."/>
            <person name="Pinto L.S.R.C."/>
            <person name="Pinto L.S."/>
            <person name="Porto J.I.R."/>
            <person name="Potrich D.P."/>
            <person name="Ramalho-Neto C.E."/>
            <person name="Reis A.M.M."/>
            <person name="Rigo L.U."/>
            <person name="Rondinelli E."/>
            <person name="Santos E.B.P."/>
            <person name="Santos F.R."/>
            <person name="Schneider M.P.C."/>
            <person name="Seuanez H.N."/>
            <person name="Silva A.M.R."/>
            <person name="da Silva A.L.C."/>
            <person name="Silva D.W."/>
            <person name="Silva R."/>
            <person name="Simoes I.C."/>
            <person name="Simon D."/>
            <person name="Soares C.M.A."/>
            <person name="Soares R.B.A."/>
            <person name="Souza E.M."/>
            <person name="Souza K.R.L."/>
            <person name="Souza R.C."/>
            <person name="Steffens M.B.R."/>
            <person name="Steindel M."/>
            <person name="Teixeira S.R."/>
            <person name="Urmenyi T."/>
            <person name="Vettore A."/>
            <person name="Wassem R."/>
            <person name="Zaha A."/>
            <person name="Simpson A.J.G."/>
        </authorList>
    </citation>
    <scope>NUCLEOTIDE SEQUENCE [LARGE SCALE GENOMIC DNA]</scope>
    <source>
        <strain>ATCC 12472 / DSM 30191 / JCM 1249 / CCUG 213 / NBRC 12614 / NCIMB 9131 / NCTC 9757 / MK</strain>
    </source>
</reference>
<sequence length="186" mass="20071">MESLSLSHHFLIAMPGMGDPLFAKSLVYLCEHGEHGAMGLIINKPSGIAMAQLFDQIDLPLDDEDTRTGLVYFGGPVQPDRGFVLHQPAGNWQSSLMVTDDIALTTSKDVLVAVSEGKKPEQLLISLGYAGWSAGQLEKEIADNGWLTVPAEPSIVFDLPYEERYDAAMALLGFDPSLLSSDVGHA</sequence>
<organism>
    <name type="scientific">Chromobacterium violaceum (strain ATCC 12472 / DSM 30191 / JCM 1249 / CCUG 213 / NBRC 12614 / NCIMB 9131 / NCTC 9757 / MK)</name>
    <dbReference type="NCBI Taxonomy" id="243365"/>
    <lineage>
        <taxon>Bacteria</taxon>
        <taxon>Pseudomonadati</taxon>
        <taxon>Pseudomonadota</taxon>
        <taxon>Betaproteobacteria</taxon>
        <taxon>Neisseriales</taxon>
        <taxon>Chromobacteriaceae</taxon>
        <taxon>Chromobacterium</taxon>
    </lineage>
</organism>
<keyword id="KW-1185">Reference proteome</keyword>
<comment type="similarity">
    <text evidence="1">Belongs to the UPF0301 (AlgH) family.</text>
</comment>
<comment type="sequence caution" evidence="2">
    <conflict type="erroneous initiation">
        <sequence resource="EMBL-CDS" id="AAQ61570"/>
    </conflict>
</comment>
<proteinExistence type="inferred from homology"/>
<accession>Q7NR75</accession>
<protein>
    <recommendedName>
        <fullName evidence="1">UPF0301 protein CV_3909</fullName>
    </recommendedName>
</protein>
<name>Y3909_CHRVO</name>